<reference key="1">
    <citation type="journal article" date="1996" name="DNA Res.">
        <title>Nucleotide sequence of the psbP gene encoding precursor of 23-kDa polypeptide of oxygen-evolving complex in Arabidopsis thaliana and its expression in the wild-type and a constitutively photomorphogenic mutant.</title>
        <authorList>
            <person name="Kochhar A."/>
            <person name="Khurana J.P."/>
            <person name="Tyagi A.K."/>
        </authorList>
    </citation>
    <scope>NUCLEOTIDE SEQUENCE [GENOMIC DNA]</scope>
    <source>
        <strain>cv. Columbia</strain>
    </source>
</reference>
<reference key="2">
    <citation type="journal article" date="2000" name="Nature">
        <title>Sequence and analysis of chromosome 1 of the plant Arabidopsis thaliana.</title>
        <authorList>
            <person name="Theologis A."/>
            <person name="Ecker J.R."/>
            <person name="Palm C.J."/>
            <person name="Federspiel N.A."/>
            <person name="Kaul S."/>
            <person name="White O."/>
            <person name="Alonso J."/>
            <person name="Altafi H."/>
            <person name="Araujo R."/>
            <person name="Bowman C.L."/>
            <person name="Brooks S.Y."/>
            <person name="Buehler E."/>
            <person name="Chan A."/>
            <person name="Chao Q."/>
            <person name="Chen H."/>
            <person name="Cheuk R.F."/>
            <person name="Chin C.W."/>
            <person name="Chung M.K."/>
            <person name="Conn L."/>
            <person name="Conway A.B."/>
            <person name="Conway A.R."/>
            <person name="Creasy T.H."/>
            <person name="Dewar K."/>
            <person name="Dunn P."/>
            <person name="Etgu P."/>
            <person name="Feldblyum T.V."/>
            <person name="Feng J.-D."/>
            <person name="Fong B."/>
            <person name="Fujii C.Y."/>
            <person name="Gill J.E."/>
            <person name="Goldsmith A.D."/>
            <person name="Haas B."/>
            <person name="Hansen N.F."/>
            <person name="Hughes B."/>
            <person name="Huizar L."/>
            <person name="Hunter J.L."/>
            <person name="Jenkins J."/>
            <person name="Johnson-Hopson C."/>
            <person name="Khan S."/>
            <person name="Khaykin E."/>
            <person name="Kim C.J."/>
            <person name="Koo H.L."/>
            <person name="Kremenetskaia I."/>
            <person name="Kurtz D.B."/>
            <person name="Kwan A."/>
            <person name="Lam B."/>
            <person name="Langin-Hooper S."/>
            <person name="Lee A."/>
            <person name="Lee J.M."/>
            <person name="Lenz C.A."/>
            <person name="Li J.H."/>
            <person name="Li Y.-P."/>
            <person name="Lin X."/>
            <person name="Liu S.X."/>
            <person name="Liu Z.A."/>
            <person name="Luros J.S."/>
            <person name="Maiti R."/>
            <person name="Marziali A."/>
            <person name="Militscher J."/>
            <person name="Miranda M."/>
            <person name="Nguyen M."/>
            <person name="Nierman W.C."/>
            <person name="Osborne B.I."/>
            <person name="Pai G."/>
            <person name="Peterson J."/>
            <person name="Pham P.K."/>
            <person name="Rizzo M."/>
            <person name="Rooney T."/>
            <person name="Rowley D."/>
            <person name="Sakano H."/>
            <person name="Salzberg S.L."/>
            <person name="Schwartz J.R."/>
            <person name="Shinn P."/>
            <person name="Southwick A.M."/>
            <person name="Sun H."/>
            <person name="Tallon L.J."/>
            <person name="Tambunga G."/>
            <person name="Toriumi M.J."/>
            <person name="Town C.D."/>
            <person name="Utterback T."/>
            <person name="Van Aken S."/>
            <person name="Vaysberg M."/>
            <person name="Vysotskaia V.S."/>
            <person name="Walker M."/>
            <person name="Wu D."/>
            <person name="Yu G."/>
            <person name="Fraser C.M."/>
            <person name="Venter J.C."/>
            <person name="Davis R.W."/>
        </authorList>
    </citation>
    <scope>NUCLEOTIDE SEQUENCE [LARGE SCALE GENOMIC DNA]</scope>
    <source>
        <strain>cv. Columbia</strain>
    </source>
</reference>
<reference key="3">
    <citation type="journal article" date="2017" name="Plant J.">
        <title>Araport11: a complete reannotation of the Arabidopsis thaliana reference genome.</title>
        <authorList>
            <person name="Cheng C.Y."/>
            <person name="Krishnakumar V."/>
            <person name="Chan A.P."/>
            <person name="Thibaud-Nissen F."/>
            <person name="Schobel S."/>
            <person name="Town C.D."/>
        </authorList>
    </citation>
    <scope>GENOME REANNOTATION</scope>
    <source>
        <strain>cv. Columbia</strain>
    </source>
</reference>
<reference key="4">
    <citation type="journal article" date="2003" name="Science">
        <title>Empirical analysis of transcriptional activity in the Arabidopsis genome.</title>
        <authorList>
            <person name="Yamada K."/>
            <person name="Lim J."/>
            <person name="Dale J.M."/>
            <person name="Chen H."/>
            <person name="Shinn P."/>
            <person name="Palm C.J."/>
            <person name="Southwick A.M."/>
            <person name="Wu H.C."/>
            <person name="Kim C.J."/>
            <person name="Nguyen M."/>
            <person name="Pham P.K."/>
            <person name="Cheuk R.F."/>
            <person name="Karlin-Newmann G."/>
            <person name="Liu S.X."/>
            <person name="Lam B."/>
            <person name="Sakano H."/>
            <person name="Wu T."/>
            <person name="Yu G."/>
            <person name="Miranda M."/>
            <person name="Quach H.L."/>
            <person name="Tripp M."/>
            <person name="Chang C.H."/>
            <person name="Lee J.M."/>
            <person name="Toriumi M.J."/>
            <person name="Chan M.M."/>
            <person name="Tang C.C."/>
            <person name="Onodera C.S."/>
            <person name="Deng J.M."/>
            <person name="Akiyama K."/>
            <person name="Ansari Y."/>
            <person name="Arakawa T."/>
            <person name="Banh J."/>
            <person name="Banno F."/>
            <person name="Bowser L."/>
            <person name="Brooks S.Y."/>
            <person name="Carninci P."/>
            <person name="Chao Q."/>
            <person name="Choy N."/>
            <person name="Enju A."/>
            <person name="Goldsmith A.D."/>
            <person name="Gurjal M."/>
            <person name="Hansen N.F."/>
            <person name="Hayashizaki Y."/>
            <person name="Johnson-Hopson C."/>
            <person name="Hsuan V.W."/>
            <person name="Iida K."/>
            <person name="Karnes M."/>
            <person name="Khan S."/>
            <person name="Koesema E."/>
            <person name="Ishida J."/>
            <person name="Jiang P.X."/>
            <person name="Jones T."/>
            <person name="Kawai J."/>
            <person name="Kamiya A."/>
            <person name="Meyers C."/>
            <person name="Nakajima M."/>
            <person name="Narusaka M."/>
            <person name="Seki M."/>
            <person name="Sakurai T."/>
            <person name="Satou M."/>
            <person name="Tamse R."/>
            <person name="Vaysberg M."/>
            <person name="Wallender E.K."/>
            <person name="Wong C."/>
            <person name="Yamamura Y."/>
            <person name="Yuan S."/>
            <person name="Shinozaki K."/>
            <person name="Davis R.W."/>
            <person name="Theologis A."/>
            <person name="Ecker J.R."/>
        </authorList>
    </citation>
    <scope>NUCLEOTIDE SEQUENCE [LARGE SCALE MRNA] (ISOFORM 1)</scope>
    <source>
        <strain>cv. Columbia</strain>
    </source>
</reference>
<reference key="5">
    <citation type="submission" date="2002-03" db="EMBL/GenBank/DDBJ databases">
        <title>Full-length cDNA from Arabidopsis thaliana.</title>
        <authorList>
            <person name="Brover V.V."/>
            <person name="Troukhan M.E."/>
            <person name="Alexandrov N.A."/>
            <person name="Lu Y.-P."/>
            <person name="Flavell R.B."/>
            <person name="Feldmann K.A."/>
        </authorList>
    </citation>
    <scope>NUCLEOTIDE SEQUENCE [LARGE SCALE MRNA] (ISOFORM 1)</scope>
</reference>
<reference key="6">
    <citation type="journal article" date="1996" name="Plant J.">
        <title>Further progress towards a catalogue of all Arabidopsis genes: analysis of a set of 5000 non-redundant ESTs.</title>
        <authorList>
            <person name="Cooke R."/>
            <person name="Raynal M."/>
            <person name="Laudie M."/>
            <person name="Grellet F."/>
            <person name="Delseny M."/>
            <person name="Morris P.-C."/>
            <person name="Guerrier D."/>
            <person name="Giraudat J."/>
            <person name="Quigley F."/>
            <person name="Clabault G."/>
            <person name="Li Y.-F."/>
            <person name="Mache R."/>
            <person name="Krivitzky M."/>
            <person name="Gy I.J.-J."/>
            <person name="Kreis M."/>
            <person name="Lecharny A."/>
            <person name="Parmentier Y."/>
            <person name="Marbach J."/>
            <person name="Fleck J."/>
            <person name="Clement B."/>
            <person name="Philipps G."/>
            <person name="Herve C."/>
            <person name="Bardet C."/>
            <person name="Tremousaygue D."/>
            <person name="Lescure B."/>
            <person name="Lacomme C."/>
            <person name="Roby D."/>
            <person name="Jourjon M.-F."/>
            <person name="Chabrier P."/>
            <person name="Charpenteau J.-L."/>
            <person name="Desprez T."/>
            <person name="Amselem J."/>
            <person name="Chiapello H."/>
            <person name="Hoefte H."/>
        </authorList>
    </citation>
    <scope>NUCLEOTIDE SEQUENCE [LARGE SCALE MRNA] OF 1-123 (ISOFORM 1)</scope>
    <source>
        <strain>cv. Columbia</strain>
        <tissue>Seedling</tissue>
    </source>
</reference>
<reference key="7">
    <citation type="journal article" date="2002" name="J. Biol. Chem.">
        <title>Proteome map of the chloroplast lumen of Arabidopsis thaliana.</title>
        <authorList>
            <person name="Schubert M."/>
            <person name="Petersson U.A."/>
            <person name="Haas B.J."/>
            <person name="Funk C."/>
            <person name="Schroeder W.P."/>
            <person name="Kieselbach T."/>
        </authorList>
    </citation>
    <scope>PROTEIN SEQUENCE OF 78-92</scope>
    <scope>SUBCELLULAR LOCATION</scope>
</reference>
<reference key="8">
    <citation type="journal article" date="2002" name="Plant Cell">
        <title>Central functions of the lumenal and peripheral thylakoid proteome of Arabidopsis determined by experimentation and genome-wide prediction.</title>
        <authorList>
            <person name="Peltier J.-B."/>
            <person name="Emanuelsson O."/>
            <person name="Kalume D.E."/>
            <person name="Ytterberg J."/>
            <person name="Friso G."/>
            <person name="Rudella A."/>
            <person name="Liberles D.A."/>
            <person name="Soederberg L."/>
            <person name="Roepstorff P."/>
            <person name="von Heijne G."/>
            <person name="van Wijk K.J."/>
        </authorList>
    </citation>
    <scope>PROTEIN SEQUENCE OF N-TERMINUS</scope>
    <scope>IDENTIFICATION BY MASS SPECTROMETRY</scope>
</reference>
<reference key="9">
    <citation type="journal article" date="2003" name="Biochem. Biophys. Res. Commun.">
        <title>Oxygen-evolving enhancer protein 2 is phosphorylated by glycine-rich protein 3/wall-associated kinase 1 in Arabidopsis.</title>
        <authorList>
            <person name="Yang E.J."/>
            <person name="Oh Y.A."/>
            <person name="Lee E.S."/>
            <person name="Park A.R."/>
            <person name="Cho S.K."/>
            <person name="Yoo Y.J."/>
            <person name="Park O.K."/>
        </authorList>
    </citation>
    <scope>PROTEIN SEQUENCE OF 78-101</scope>
    <scope>IDENTIFICATION BY MASS SPECTROMETRY</scope>
    <scope>INTERACTION WITH WAK1</scope>
    <scope>PHOSPHORYLATION</scope>
</reference>
<reference key="10">
    <citation type="journal article" date="2007" name="Plant Physiol.">
        <title>Distinct functions for the two PsbP-like proteins PPL1 and PPL2 in the chloroplast thylakoid lumen of Arabidopsis.</title>
        <authorList>
            <person name="Ishihara S."/>
            <person name="Takabayashi A."/>
            <person name="Ido K."/>
            <person name="Endo T."/>
            <person name="Ifuku K."/>
            <person name="Sato F."/>
        </authorList>
    </citation>
    <scope>GENE FAMILY</scope>
    <scope>NOMENCLATURE</scope>
</reference>
<reference key="11">
    <citation type="journal article" date="2008" name="PLoS ONE">
        <title>Sorting signals, N-terminal modifications and abundance of the chloroplast proteome.</title>
        <authorList>
            <person name="Zybailov B."/>
            <person name="Rutschow H."/>
            <person name="Friso G."/>
            <person name="Rudella A."/>
            <person name="Emanuelsson O."/>
            <person name="Sun Q."/>
            <person name="van Wijk K.J."/>
        </authorList>
    </citation>
    <scope>IDENTIFICATION BY MASS SPECTROMETRY</scope>
    <scope>SUBCELLULAR LOCATION [LARGE SCALE ANALYSIS]</scope>
</reference>
<reference key="12">
    <citation type="journal article" date="2009" name="Plant Physiol.">
        <title>Large-scale Arabidopsis phosphoproteome profiling reveals novel chloroplast kinase substrates and phosphorylation networks.</title>
        <authorList>
            <person name="Reiland S."/>
            <person name="Messerli G."/>
            <person name="Baerenfaller K."/>
            <person name="Gerrits B."/>
            <person name="Endler A."/>
            <person name="Grossmann J."/>
            <person name="Gruissem W."/>
            <person name="Baginsky S."/>
        </authorList>
    </citation>
    <scope>IDENTIFICATION BY MASS SPECTROMETRY [LARGE SCALE ANALYSIS]</scope>
</reference>
<reference key="13">
    <citation type="journal article" date="2012" name="J. Proteome Res.">
        <title>Identification of phosphoproteins in Arabidopsis thaliana leaves using polyethylene glycol fractionation, immobilized metal-ion affinity chromatography, two-dimensional gel electrophoresis and mass spectrometry.</title>
        <authorList>
            <person name="Aryal U.K."/>
            <person name="Krochko J.E."/>
            <person name="Ross A.R."/>
        </authorList>
    </citation>
    <scope>PHOSPHORYLATION [LARGE SCALE ANALYSIS] AT SER-153</scope>
    <scope>IDENTIFICATION BY MASS SPECTROMETRY [LARGE SCALE ANALYSIS]</scope>
</reference>
<accession>Q42029</accession>
<comment type="function">
    <text>May be involved in the regulation of photosystem II.</text>
</comment>
<comment type="subunit">
    <text evidence="4">Interacts with WAK1.</text>
</comment>
<comment type="subcellular location">
    <subcellularLocation>
        <location evidence="2 5">Plastid</location>
        <location evidence="2 5">Chloroplast thylakoid lumen</location>
    </subcellularLocation>
    <text>Associated with the photosystem II complex.</text>
</comment>
<comment type="alternative products">
    <event type="alternative splicing"/>
    <isoform>
        <id>Q42029-1</id>
        <name>1</name>
        <sequence type="displayed"/>
    </isoform>
    <isoform>
        <id>Q42029-2</id>
        <name>2</name>
        <sequence type="described" ref="VSP_034341 VSP_034342"/>
    </isoform>
</comment>
<comment type="similarity">
    <text evidence="6">Belongs to the PsbP family.</text>
</comment>
<keyword id="KW-0025">Alternative splicing</keyword>
<keyword id="KW-0150">Chloroplast</keyword>
<keyword id="KW-0903">Direct protein sequencing</keyword>
<keyword id="KW-0597">Phosphoprotein</keyword>
<keyword id="KW-0602">Photosynthesis</keyword>
<keyword id="KW-0604">Photosystem II</keyword>
<keyword id="KW-0934">Plastid</keyword>
<keyword id="KW-1185">Reference proteome</keyword>
<keyword id="KW-0793">Thylakoid</keyword>
<keyword id="KW-0809">Transit peptide</keyword>
<feature type="transit peptide" description="Chloroplast" evidence="1">
    <location>
        <begin position="1"/>
        <end status="unknown"/>
    </location>
</feature>
<feature type="transit peptide" description="Thylakoid" evidence="2 3 4">
    <location>
        <begin status="unknown"/>
        <end position="77"/>
    </location>
</feature>
<feature type="chain" id="PRO_0000029571" description="Oxygen-evolving enhancer protein 2-1, chloroplastic">
    <location>
        <begin position="78"/>
        <end position="263"/>
    </location>
</feature>
<feature type="modified residue" description="Phosphoserine" evidence="7">
    <location>
        <position position="153"/>
    </location>
</feature>
<feature type="splice variant" id="VSP_034341" description="In isoform 2." evidence="6">
    <location>
        <begin position="1"/>
        <end position="44"/>
    </location>
</feature>
<feature type="splice variant" id="VSP_034342" description="In isoform 2." evidence="6">
    <original>SHEDDNSAVSRRLALTLLVGAAAVGSKVSPADAAYGEAA</original>
    <variation>MKTITPPSPAVLLSLSSSAPLLLVPKYLLLMPPTVKLVP</variation>
    <location>
        <begin position="45"/>
        <end position="83"/>
    </location>
</feature>
<feature type="sequence conflict" description="In Ref. 9; AA sequence." evidence="6" ref="9">
    <original>G</original>
    <variation>VY</variation>
    <location>
        <position position="80"/>
    </location>
</feature>
<evidence type="ECO:0000255" key="1"/>
<evidence type="ECO:0000269" key="2">
    <source>
    </source>
</evidence>
<evidence type="ECO:0000269" key="3">
    <source>
    </source>
</evidence>
<evidence type="ECO:0000269" key="4">
    <source>
    </source>
</evidence>
<evidence type="ECO:0000269" key="5">
    <source>
    </source>
</evidence>
<evidence type="ECO:0000305" key="6"/>
<evidence type="ECO:0007744" key="7">
    <source>
    </source>
</evidence>
<protein>
    <recommendedName>
        <fullName>Oxygen-evolving enhancer protein 2-1, chloroplastic</fullName>
        <shortName>OEE2</shortName>
    </recommendedName>
    <alternativeName>
        <fullName>23 kDa subunit of oxygen evolving system of photosystem II</fullName>
    </alternativeName>
    <alternativeName>
        <fullName>23 kDa thylakoid membrane protein</fullName>
    </alternativeName>
    <alternativeName>
        <fullName>OEC 23 kDa subunit</fullName>
        <shortName>OEC23</shortName>
    </alternativeName>
</protein>
<gene>
    <name type="primary">PSBP1</name>
    <name type="synonym">PSBP</name>
    <name type="ordered locus">At1g06680</name>
    <name type="ORF">F12K11.3</name>
    <name type="ORF">F4H5_18</name>
</gene>
<sequence>MAYSACFLHQSALASSAARSSSSSSSQRHVSLSKPVQIICKAQQSHEDDNSAVSRRLALTLLVGAAAVGSKVSPADAAYGEAANVFGKPKTNTDFLPYNGDGFKVQVPAKWNPSKEIEYPGQVLRFEDNFDATSNLNVMVTPTDKKSITDYGSPEEFLSQVNYLLGKQAYFGETASEGGFDNNAVATANILESSSQEVGGKPYYYLSVLTRTADGDEGGKHQLITATVNGGKLYICKAQAGDKRWFKGARKFVESAATSFSVA</sequence>
<dbReference type="EMBL" id="X98108">
    <property type="protein sequence ID" value="CAA66785.1"/>
    <property type="molecule type" value="Genomic_DNA"/>
</dbReference>
<dbReference type="EMBL" id="AC007592">
    <property type="protein sequence ID" value="AAF24829.1"/>
    <property type="molecule type" value="Genomic_DNA"/>
</dbReference>
<dbReference type="EMBL" id="CP002684">
    <property type="protein sequence ID" value="AEE28022.1"/>
    <property type="molecule type" value="Genomic_DNA"/>
</dbReference>
<dbReference type="EMBL" id="CP002684">
    <property type="protein sequence ID" value="AEE28023.1"/>
    <property type="molecule type" value="Genomic_DNA"/>
</dbReference>
<dbReference type="EMBL" id="AY056416">
    <property type="protein sequence ID" value="AAL08272.1"/>
    <property type="molecule type" value="mRNA"/>
</dbReference>
<dbReference type="EMBL" id="AY070469">
    <property type="protein sequence ID" value="AAL49935.1"/>
    <property type="molecule type" value="mRNA"/>
</dbReference>
<dbReference type="EMBL" id="AY074308">
    <property type="protein sequence ID" value="AAL67005.1"/>
    <property type="molecule type" value="mRNA"/>
</dbReference>
<dbReference type="EMBL" id="AY096487">
    <property type="protein sequence ID" value="AAM20127.1"/>
    <property type="molecule type" value="mRNA"/>
</dbReference>
<dbReference type="EMBL" id="AY087305">
    <property type="protein sequence ID" value="AAM64856.1"/>
    <property type="molecule type" value="mRNA"/>
</dbReference>
<dbReference type="EMBL" id="Z25620">
    <property type="protein sequence ID" value="CAA80998.1"/>
    <property type="molecule type" value="mRNA"/>
</dbReference>
<dbReference type="PIR" id="JC5271">
    <property type="entry name" value="JC5271"/>
</dbReference>
<dbReference type="RefSeq" id="NP_001117239.1">
    <molecule id="Q42029-2"/>
    <property type="nucleotide sequence ID" value="NM_001123767.1"/>
</dbReference>
<dbReference type="RefSeq" id="NP_172153.1">
    <molecule id="Q42029-1"/>
    <property type="nucleotide sequence ID" value="NM_100545.7"/>
</dbReference>
<dbReference type="SMR" id="Q42029"/>
<dbReference type="BioGRID" id="22419">
    <property type="interactions" value="8"/>
</dbReference>
<dbReference type="FunCoup" id="Q42029">
    <property type="interactions" value="1170"/>
</dbReference>
<dbReference type="IntAct" id="Q42029">
    <property type="interactions" value="2"/>
</dbReference>
<dbReference type="STRING" id="3702.Q42029"/>
<dbReference type="TCDB" id="3.E.2.2.3">
    <property type="family name" value="the photosynthetic reaction center (prc) family"/>
</dbReference>
<dbReference type="iPTMnet" id="Q42029"/>
<dbReference type="PaxDb" id="3702-AT1G06680.1"/>
<dbReference type="ProteomicsDB" id="226230">
    <molecule id="Q42029-1"/>
</dbReference>
<dbReference type="DNASU" id="837178"/>
<dbReference type="EnsemblPlants" id="AT1G06680.1">
    <molecule id="Q42029-1"/>
    <property type="protein sequence ID" value="AT1G06680.1"/>
    <property type="gene ID" value="AT1G06680"/>
</dbReference>
<dbReference type="EnsemblPlants" id="AT1G06680.2">
    <molecule id="Q42029-2"/>
    <property type="protein sequence ID" value="AT1G06680.2"/>
    <property type="gene ID" value="AT1G06680"/>
</dbReference>
<dbReference type="GeneID" id="837178"/>
<dbReference type="Gramene" id="AT1G06680.1">
    <molecule id="Q42029-1"/>
    <property type="protein sequence ID" value="AT1G06680.1"/>
    <property type="gene ID" value="AT1G06680"/>
</dbReference>
<dbReference type="Gramene" id="AT1G06680.2">
    <molecule id="Q42029-2"/>
    <property type="protein sequence ID" value="AT1G06680.2"/>
    <property type="gene ID" value="AT1G06680"/>
</dbReference>
<dbReference type="KEGG" id="ath:AT1G06680"/>
<dbReference type="Araport" id="AT1G06680"/>
<dbReference type="TAIR" id="AT1G06680">
    <property type="gene designation" value="PSBP-1"/>
</dbReference>
<dbReference type="eggNOG" id="ENOG502QUMW">
    <property type="taxonomic scope" value="Eukaryota"/>
</dbReference>
<dbReference type="HOGENOM" id="CLU_071157_0_0_1"/>
<dbReference type="InParanoid" id="Q42029"/>
<dbReference type="OMA" id="QTHEDDN"/>
<dbReference type="OrthoDB" id="507333at2759"/>
<dbReference type="PhylomeDB" id="Q42029"/>
<dbReference type="CD-CODE" id="4299E36E">
    <property type="entry name" value="Nucleolus"/>
</dbReference>
<dbReference type="CD-CODE" id="4A9B7D75">
    <property type="entry name" value="Synthetic Condensate 000339"/>
</dbReference>
<dbReference type="PRO" id="PR:Q42029"/>
<dbReference type="Proteomes" id="UP000006548">
    <property type="component" value="Chromosome 1"/>
</dbReference>
<dbReference type="ExpressionAtlas" id="Q42029">
    <property type="expression patterns" value="baseline and differential"/>
</dbReference>
<dbReference type="GO" id="GO:0048046">
    <property type="term" value="C:apoplast"/>
    <property type="evidence" value="ECO:0007005"/>
    <property type="project" value="TAIR"/>
</dbReference>
<dbReference type="GO" id="GO:0009507">
    <property type="term" value="C:chloroplast"/>
    <property type="evidence" value="ECO:0007005"/>
    <property type="project" value="TAIR"/>
</dbReference>
<dbReference type="GO" id="GO:0009941">
    <property type="term" value="C:chloroplast envelope"/>
    <property type="evidence" value="ECO:0007005"/>
    <property type="project" value="TAIR"/>
</dbReference>
<dbReference type="GO" id="GO:0009570">
    <property type="term" value="C:chloroplast stroma"/>
    <property type="evidence" value="ECO:0007005"/>
    <property type="project" value="TAIR"/>
</dbReference>
<dbReference type="GO" id="GO:0009534">
    <property type="term" value="C:chloroplast thylakoid"/>
    <property type="evidence" value="ECO:0000314"/>
    <property type="project" value="TAIR"/>
</dbReference>
<dbReference type="GO" id="GO:0009543">
    <property type="term" value="C:chloroplast thylakoid lumen"/>
    <property type="evidence" value="ECO:0007669"/>
    <property type="project" value="UniProtKB-SubCell"/>
</dbReference>
<dbReference type="GO" id="GO:0009535">
    <property type="term" value="C:chloroplast thylakoid membrane"/>
    <property type="evidence" value="ECO:0007005"/>
    <property type="project" value="TAIR"/>
</dbReference>
<dbReference type="GO" id="GO:0005576">
    <property type="term" value="C:extracellular region"/>
    <property type="evidence" value="ECO:0007005"/>
    <property type="project" value="TAIR"/>
</dbReference>
<dbReference type="GO" id="GO:0019898">
    <property type="term" value="C:extrinsic component of membrane"/>
    <property type="evidence" value="ECO:0000304"/>
    <property type="project" value="TAIR"/>
</dbReference>
<dbReference type="GO" id="GO:0009654">
    <property type="term" value="C:photosystem II oxygen evolving complex"/>
    <property type="evidence" value="ECO:0007669"/>
    <property type="project" value="InterPro"/>
</dbReference>
<dbReference type="GO" id="GO:0009579">
    <property type="term" value="C:thylakoid"/>
    <property type="evidence" value="ECO:0007005"/>
    <property type="project" value="TAIR"/>
</dbReference>
<dbReference type="GO" id="GO:0031977">
    <property type="term" value="C:thylakoid lumen"/>
    <property type="evidence" value="ECO:0007005"/>
    <property type="project" value="TAIR"/>
</dbReference>
<dbReference type="GO" id="GO:0005509">
    <property type="term" value="F:calcium ion binding"/>
    <property type="evidence" value="ECO:0007669"/>
    <property type="project" value="InterPro"/>
</dbReference>
<dbReference type="GO" id="GO:0003729">
    <property type="term" value="F:mRNA binding"/>
    <property type="evidence" value="ECO:0000314"/>
    <property type="project" value="TAIR"/>
</dbReference>
<dbReference type="GO" id="GO:0008266">
    <property type="term" value="F:poly(U) RNA binding"/>
    <property type="evidence" value="ECO:0000314"/>
    <property type="project" value="TAIR"/>
</dbReference>
<dbReference type="GO" id="GO:0019904">
    <property type="term" value="F:protein domain specific binding"/>
    <property type="evidence" value="ECO:0000353"/>
    <property type="project" value="CAFA"/>
</dbReference>
<dbReference type="GO" id="GO:1901149">
    <property type="term" value="F:salicylic acid binding"/>
    <property type="evidence" value="ECO:0007005"/>
    <property type="project" value="TAIR"/>
</dbReference>
<dbReference type="GO" id="GO:0019684">
    <property type="term" value="P:photosynthesis, light reaction"/>
    <property type="evidence" value="ECO:0000304"/>
    <property type="project" value="TAIR"/>
</dbReference>
<dbReference type="FunFam" id="3.40.1000.10:FF:000005">
    <property type="entry name" value="Oxygen-evolving enhancer protein 2"/>
    <property type="match status" value="1"/>
</dbReference>
<dbReference type="Gene3D" id="3.40.1000.10">
    <property type="entry name" value="Mog1/PsbP, alpha/beta/alpha sandwich"/>
    <property type="match status" value="1"/>
</dbReference>
<dbReference type="InterPro" id="IPR016123">
    <property type="entry name" value="Mog1/PsbP_a/b/a-sand"/>
</dbReference>
<dbReference type="InterPro" id="IPR002683">
    <property type="entry name" value="PsbP_C"/>
</dbReference>
<dbReference type="PANTHER" id="PTHR31407">
    <property type="match status" value="1"/>
</dbReference>
<dbReference type="PANTHER" id="PTHR31407:SF6">
    <property type="entry name" value="OXYGEN-EVOLVING ENHANCER PROTEIN 2-1, CHLOROPLASTIC"/>
    <property type="match status" value="1"/>
</dbReference>
<dbReference type="Pfam" id="PF01789">
    <property type="entry name" value="PsbP"/>
    <property type="match status" value="1"/>
</dbReference>
<dbReference type="SUPFAM" id="SSF55724">
    <property type="entry name" value="Mog1p/PsbP-like"/>
    <property type="match status" value="1"/>
</dbReference>
<name>PSBP1_ARATH</name>
<organism>
    <name type="scientific">Arabidopsis thaliana</name>
    <name type="common">Mouse-ear cress</name>
    <dbReference type="NCBI Taxonomy" id="3702"/>
    <lineage>
        <taxon>Eukaryota</taxon>
        <taxon>Viridiplantae</taxon>
        <taxon>Streptophyta</taxon>
        <taxon>Embryophyta</taxon>
        <taxon>Tracheophyta</taxon>
        <taxon>Spermatophyta</taxon>
        <taxon>Magnoliopsida</taxon>
        <taxon>eudicotyledons</taxon>
        <taxon>Gunneridae</taxon>
        <taxon>Pentapetalae</taxon>
        <taxon>rosids</taxon>
        <taxon>malvids</taxon>
        <taxon>Brassicales</taxon>
        <taxon>Brassicaceae</taxon>
        <taxon>Camelineae</taxon>
        <taxon>Arabidopsis</taxon>
    </lineage>
</organism>
<proteinExistence type="evidence at protein level"/>